<gene>
    <name type="primary">prlC</name>
    <name type="synonym">opdA</name>
    <name type="ordered locus">b3498</name>
    <name type="ordered locus">JW3465</name>
</gene>
<protein>
    <recommendedName>
        <fullName>Oligopeptidase A</fullName>
        <ecNumber>3.4.24.70</ecNumber>
    </recommendedName>
</protein>
<name>OPDA_ECOLI</name>
<evidence type="ECO:0000250" key="1"/>
<evidence type="ECO:0000255" key="2">
    <source>
        <dbReference type="PROSITE-ProRule" id="PRU10095"/>
    </source>
</evidence>
<evidence type="ECO:0000305" key="3"/>
<dbReference type="EC" id="3.4.24.70"/>
<dbReference type="EMBL" id="M93984">
    <property type="protein sequence ID" value="AAA16155.1"/>
    <property type="molecule type" value="Unassigned_DNA"/>
</dbReference>
<dbReference type="EMBL" id="U00039">
    <property type="protein sequence ID" value="AAB18474.1"/>
    <property type="molecule type" value="Genomic_DNA"/>
</dbReference>
<dbReference type="EMBL" id="U00096">
    <property type="protein sequence ID" value="AAC76523.1"/>
    <property type="molecule type" value="Genomic_DNA"/>
</dbReference>
<dbReference type="EMBL" id="AP009048">
    <property type="protein sequence ID" value="BAE77796.1"/>
    <property type="molecule type" value="Genomic_DNA"/>
</dbReference>
<dbReference type="PIR" id="S47718">
    <property type="entry name" value="S47718"/>
</dbReference>
<dbReference type="RefSeq" id="NP_417955.1">
    <property type="nucleotide sequence ID" value="NC_000913.3"/>
</dbReference>
<dbReference type="RefSeq" id="WP_001298719.1">
    <property type="nucleotide sequence ID" value="NZ_SSZK01000042.1"/>
</dbReference>
<dbReference type="SMR" id="P27298"/>
<dbReference type="BioGRID" id="4262506">
    <property type="interactions" value="58"/>
</dbReference>
<dbReference type="BioGRID" id="852324">
    <property type="interactions" value="1"/>
</dbReference>
<dbReference type="DIP" id="DIP-10566N"/>
<dbReference type="FunCoup" id="P27298">
    <property type="interactions" value="716"/>
</dbReference>
<dbReference type="IntAct" id="P27298">
    <property type="interactions" value="4"/>
</dbReference>
<dbReference type="STRING" id="511145.b3498"/>
<dbReference type="MEROPS" id="M03.004"/>
<dbReference type="jPOST" id="P27298"/>
<dbReference type="PaxDb" id="511145-b3498"/>
<dbReference type="EnsemblBacteria" id="AAC76523">
    <property type="protein sequence ID" value="AAC76523"/>
    <property type="gene ID" value="b3498"/>
</dbReference>
<dbReference type="GeneID" id="948016"/>
<dbReference type="KEGG" id="ecj:JW3465"/>
<dbReference type="KEGG" id="eco:b3498"/>
<dbReference type="KEGG" id="ecoc:C3026_18945"/>
<dbReference type="PATRIC" id="fig|511145.12.peg.3600"/>
<dbReference type="EchoBASE" id="EB1411"/>
<dbReference type="eggNOG" id="COG0339">
    <property type="taxonomic scope" value="Bacteria"/>
</dbReference>
<dbReference type="HOGENOM" id="CLU_001805_4_1_6"/>
<dbReference type="InParanoid" id="P27298"/>
<dbReference type="OMA" id="KNFQSAM"/>
<dbReference type="OrthoDB" id="9773538at2"/>
<dbReference type="PhylomeDB" id="P27298"/>
<dbReference type="BioCyc" id="EcoCyc:EG11441-MONOMER"/>
<dbReference type="BioCyc" id="MetaCyc:EG11441-MONOMER"/>
<dbReference type="PRO" id="PR:P27298"/>
<dbReference type="Proteomes" id="UP000000625">
    <property type="component" value="Chromosome"/>
</dbReference>
<dbReference type="GO" id="GO:0005737">
    <property type="term" value="C:cytoplasm"/>
    <property type="evidence" value="ECO:0000304"/>
    <property type="project" value="EcoliWiki"/>
</dbReference>
<dbReference type="GO" id="GO:0005829">
    <property type="term" value="C:cytosol"/>
    <property type="evidence" value="ECO:0000314"/>
    <property type="project" value="EcoCyc"/>
</dbReference>
<dbReference type="GO" id="GO:0046872">
    <property type="term" value="F:metal ion binding"/>
    <property type="evidence" value="ECO:0007669"/>
    <property type="project" value="UniProtKB-KW"/>
</dbReference>
<dbReference type="GO" id="GO:0004222">
    <property type="term" value="F:metalloendopeptidase activity"/>
    <property type="evidence" value="ECO:0000318"/>
    <property type="project" value="GO_Central"/>
</dbReference>
<dbReference type="GO" id="GO:0008233">
    <property type="term" value="F:peptidase activity"/>
    <property type="evidence" value="ECO:0000314"/>
    <property type="project" value="EcoCyc"/>
</dbReference>
<dbReference type="GO" id="GO:0006260">
    <property type="term" value="P:DNA replication"/>
    <property type="evidence" value="ECO:0000304"/>
    <property type="project" value="EcoCyc"/>
</dbReference>
<dbReference type="GO" id="GO:0006518">
    <property type="term" value="P:peptide metabolic process"/>
    <property type="evidence" value="ECO:0000318"/>
    <property type="project" value="GO_Central"/>
</dbReference>
<dbReference type="GO" id="GO:0006508">
    <property type="term" value="P:proteolysis"/>
    <property type="evidence" value="ECO:0000318"/>
    <property type="project" value="GO_Central"/>
</dbReference>
<dbReference type="GO" id="GO:0006465">
    <property type="term" value="P:signal peptide processing"/>
    <property type="evidence" value="ECO:0000314"/>
    <property type="project" value="EcoliWiki"/>
</dbReference>
<dbReference type="CDD" id="cd06456">
    <property type="entry name" value="M3A_DCP"/>
    <property type="match status" value="1"/>
</dbReference>
<dbReference type="FunFam" id="3.40.390.10:FF:000009">
    <property type="entry name" value="Oligopeptidase A"/>
    <property type="match status" value="1"/>
</dbReference>
<dbReference type="Gene3D" id="3.40.390.10">
    <property type="entry name" value="Collagenase (Catalytic Domain)"/>
    <property type="match status" value="1"/>
</dbReference>
<dbReference type="Gene3D" id="1.20.1050.40">
    <property type="entry name" value="Endopeptidase. Chain P, domain 1"/>
    <property type="match status" value="1"/>
</dbReference>
<dbReference type="Gene3D" id="1.10.1370.10">
    <property type="entry name" value="Neurolysin, domain 3"/>
    <property type="match status" value="1"/>
</dbReference>
<dbReference type="InterPro" id="IPR034005">
    <property type="entry name" value="M3A_DCP"/>
</dbReference>
<dbReference type="InterPro" id="IPR024079">
    <property type="entry name" value="MetalloPept_cat_dom_sf"/>
</dbReference>
<dbReference type="InterPro" id="IPR024077">
    <property type="entry name" value="Neurolysin/TOP_dom2"/>
</dbReference>
<dbReference type="InterPro" id="IPR024080">
    <property type="entry name" value="Neurolysin/TOP_N"/>
</dbReference>
<dbReference type="InterPro" id="IPR045666">
    <property type="entry name" value="OpdA_N"/>
</dbReference>
<dbReference type="InterPro" id="IPR045090">
    <property type="entry name" value="Pept_M3A_M3B"/>
</dbReference>
<dbReference type="InterPro" id="IPR001567">
    <property type="entry name" value="Pept_M3A_M3B_dom"/>
</dbReference>
<dbReference type="NCBIfam" id="NF008159">
    <property type="entry name" value="PRK10911.1"/>
    <property type="match status" value="1"/>
</dbReference>
<dbReference type="PANTHER" id="PTHR11804">
    <property type="entry name" value="PROTEASE M3 THIMET OLIGOPEPTIDASE-RELATED"/>
    <property type="match status" value="1"/>
</dbReference>
<dbReference type="PANTHER" id="PTHR11804:SF84">
    <property type="entry name" value="SACCHAROLYSIN"/>
    <property type="match status" value="1"/>
</dbReference>
<dbReference type="Pfam" id="PF01432">
    <property type="entry name" value="Peptidase_M3"/>
    <property type="match status" value="1"/>
</dbReference>
<dbReference type="Pfam" id="PF19310">
    <property type="entry name" value="TOP_N"/>
    <property type="match status" value="1"/>
</dbReference>
<dbReference type="SUPFAM" id="SSF55486">
    <property type="entry name" value="Metalloproteases ('zincins'), catalytic domain"/>
    <property type="match status" value="1"/>
</dbReference>
<dbReference type="PROSITE" id="PS00142">
    <property type="entry name" value="ZINC_PROTEASE"/>
    <property type="match status" value="1"/>
</dbReference>
<keyword id="KW-0378">Hydrolase</keyword>
<keyword id="KW-0479">Metal-binding</keyword>
<keyword id="KW-0482">Metalloprotease</keyword>
<keyword id="KW-0645">Protease</keyword>
<keyword id="KW-1185">Reference proteome</keyword>
<keyword id="KW-0862">Zinc</keyword>
<reference key="1">
    <citation type="journal article" date="1992" name="J. Bacteriol.">
        <title>Escherichia coli prlC encodes an endopeptidase and is homologous to the Salmonella typhimurium opdA gene.</title>
        <authorList>
            <person name="Conlin C.A."/>
            <person name="Trun N.J."/>
            <person name="Silhavy T.J."/>
            <person name="Miller C.G."/>
        </authorList>
    </citation>
    <scope>NUCLEOTIDE SEQUENCE [GENOMIC DNA]</scope>
</reference>
<reference key="2">
    <citation type="journal article" date="1993" name="J. Bacteriol.">
        <title>Location of the prlC (opdA) gene on the physical map of Escherichia coli.</title>
        <authorList>
            <person name="Conlin C.A."/>
            <person name="Miller C.G."/>
        </authorList>
    </citation>
    <scope>SEQUENCE REVISION TO 43</scope>
</reference>
<reference key="3">
    <citation type="journal article" date="1994" name="Nucleic Acids Res.">
        <title>Analysis of the Escherichia coli genome. V. DNA sequence of the region from 76.0 to 81.5 minutes.</title>
        <authorList>
            <person name="Sofia H.J."/>
            <person name="Burland V."/>
            <person name="Daniels D.L."/>
            <person name="Plunkett G. III"/>
            <person name="Blattner F.R."/>
        </authorList>
    </citation>
    <scope>NUCLEOTIDE SEQUENCE [LARGE SCALE GENOMIC DNA]</scope>
    <source>
        <strain>K12 / MG1655 / ATCC 47076</strain>
    </source>
</reference>
<reference key="4">
    <citation type="journal article" date="1997" name="Science">
        <title>The complete genome sequence of Escherichia coli K-12.</title>
        <authorList>
            <person name="Blattner F.R."/>
            <person name="Plunkett G. III"/>
            <person name="Bloch C.A."/>
            <person name="Perna N.T."/>
            <person name="Burland V."/>
            <person name="Riley M."/>
            <person name="Collado-Vides J."/>
            <person name="Glasner J.D."/>
            <person name="Rode C.K."/>
            <person name="Mayhew G.F."/>
            <person name="Gregor J."/>
            <person name="Davis N.W."/>
            <person name="Kirkpatrick H.A."/>
            <person name="Goeden M.A."/>
            <person name="Rose D.J."/>
            <person name="Mau B."/>
            <person name="Shao Y."/>
        </authorList>
    </citation>
    <scope>NUCLEOTIDE SEQUENCE [LARGE SCALE GENOMIC DNA]</scope>
    <source>
        <strain>K12 / MG1655 / ATCC 47076</strain>
    </source>
</reference>
<reference key="5">
    <citation type="journal article" date="2006" name="Mol. Syst. Biol.">
        <title>Highly accurate genome sequences of Escherichia coli K-12 strains MG1655 and W3110.</title>
        <authorList>
            <person name="Hayashi K."/>
            <person name="Morooka N."/>
            <person name="Yamamoto Y."/>
            <person name="Fujita K."/>
            <person name="Isono K."/>
            <person name="Choi S."/>
            <person name="Ohtsubo E."/>
            <person name="Baba T."/>
            <person name="Wanner B.L."/>
            <person name="Mori H."/>
            <person name="Horiuchi T."/>
        </authorList>
    </citation>
    <scope>NUCLEOTIDE SEQUENCE [LARGE SCALE GENOMIC DNA]</scope>
    <source>
        <strain>K12 / W3110 / ATCC 27325 / DSM 5911</strain>
    </source>
</reference>
<proteinExistence type="inferred from homology"/>
<feature type="chain" id="PRO_0000078159" description="Oligopeptidase A">
    <location>
        <begin position="1"/>
        <end position="680"/>
    </location>
</feature>
<feature type="active site" evidence="2">
    <location>
        <position position="470"/>
    </location>
</feature>
<feature type="binding site" evidence="2">
    <location>
        <position position="469"/>
    </location>
    <ligand>
        <name>Zn(2+)</name>
        <dbReference type="ChEBI" id="CHEBI:29105"/>
        <note>catalytic</note>
    </ligand>
</feature>
<feature type="binding site" evidence="2">
    <location>
        <position position="473"/>
    </location>
    <ligand>
        <name>Zn(2+)</name>
        <dbReference type="ChEBI" id="CHEBI:29105"/>
        <note>catalytic</note>
    </ligand>
</feature>
<feature type="binding site" evidence="2">
    <location>
        <position position="476"/>
    </location>
    <ligand>
        <name>Zn(2+)</name>
        <dbReference type="ChEBI" id="CHEBI:29105"/>
        <note>catalytic</note>
    </ligand>
</feature>
<feature type="sequence conflict" description="In Ref. 1; AAA16155." evidence="3" ref="1">
    <original>LL</original>
    <variation>FV</variation>
    <location>
        <begin position="211"/>
        <end position="212"/>
    </location>
</feature>
<feature type="sequence conflict" description="In Ref. 1; AAA16155." evidence="3" ref="1">
    <original>LR</original>
    <variation>AA</variation>
    <location>
        <begin position="265"/>
        <end position="266"/>
    </location>
</feature>
<feature type="sequence conflict" description="In Ref. 1; AAA16155." evidence="3" ref="1">
    <original>D</original>
    <variation>H</variation>
    <location>
        <position position="390"/>
    </location>
</feature>
<feature type="sequence conflict" description="In Ref. 1; AAA16155." evidence="3" ref="1">
    <original>S</original>
    <variation>T</variation>
    <location>
        <position position="406"/>
    </location>
</feature>
<feature type="sequence conflict" description="In Ref. 1; AAA16155." evidence="3" ref="1">
    <original>A</original>
    <variation>G</variation>
    <location>
        <position position="516"/>
    </location>
</feature>
<comment type="function">
    <text>May play a specific role in the degradation of signal peptides after they are released from precursor forms of secreted proteins. Can cleave N-acetyl-L-Ala(4).</text>
</comment>
<comment type="catalytic activity">
    <reaction>
        <text>Hydrolysis of oligopeptides, with broad specificity. Gly or Ala commonly occur as P1 or P1' residues, but more distant residues are also important, as is shown by the fact that Z-Gly-Pro-Gly-|-Gly-Pro-Ala is cleaved, but not Z-(Gly)(5).</text>
        <dbReference type="EC" id="3.4.24.70"/>
    </reaction>
</comment>
<comment type="cofactor">
    <cofactor evidence="1">
        <name>Zn(2+)</name>
        <dbReference type="ChEBI" id="CHEBI:29105"/>
    </cofactor>
    <text evidence="1">Binds 1 zinc ion.</text>
</comment>
<comment type="similarity">
    <text evidence="3">Belongs to the peptidase M3 family.</text>
</comment>
<sequence length="680" mass="77167">MTNPLLTPFELPPFSKILPEHVVPAVTKALNDCRENVERVVAQGAPYTWENLCQPLAEVDDVLGRIFSPVSHLNSVKNSPELREAYEQTLPLLSEYSTWVGQHEGLYKAYRDLRDGDHYATLNTAQKKAVDNALRDFELSGIGLPKEKQQRYGEIATRLSELGNQYSNNVLDATMGWTKLVTDEAELAGMPESALAAAKAQAEAKELEGYLLTLDIPSYLPVMTYCDNQALREEMYRAYSTRASDQGPNAGKWDNSKVMEEILALRHELAQLLGFENYAFKSLATKMAENPQQVLDFLTDLAKRARPQGEKELAQLRAFAKAEFGVDELQPWDIAYYSEKQKQHLYSISDEQLRPYFPENKAVNGLFEVVKRIYGITAKERKDVDVWHPDVRFFELYDENNELRGSFYLDLYARENKRGGAWMDDCVGQMRKADGSLQKPVAYLTCNFNRPVNGKPALFTHDEVITLFHEFGHGLHHMLTRIETAGVSGISGVPWDAVELPSQFMENWCWEPEALAFISGHYETGEPLPKELLDKMLAAKNYQAALFILRQLEFGLFDFRLHAEFRPDQGAKILETLAEIKKLVAVVPSPSWGRFPHAFSHIFAGGYAAGYYSYLWADVLAADAFSRFEEEGIFNRETGQSFLDNILSRGGSEEPMDLFKRFRGREPQLDAMLEHYGIKG</sequence>
<accession>P27298</accession>
<accession>Q2M7G0</accession>
<organism>
    <name type="scientific">Escherichia coli (strain K12)</name>
    <dbReference type="NCBI Taxonomy" id="83333"/>
    <lineage>
        <taxon>Bacteria</taxon>
        <taxon>Pseudomonadati</taxon>
        <taxon>Pseudomonadota</taxon>
        <taxon>Gammaproteobacteria</taxon>
        <taxon>Enterobacterales</taxon>
        <taxon>Enterobacteriaceae</taxon>
        <taxon>Escherichia</taxon>
    </lineage>
</organism>